<sequence>MNTNDAIKILKDNGLKYTDKRKDMLDIFVEEDKYLNAKHIQQKMDKDYPGISFDTVYRNLHLFKDLGIIESTELEGEMKFRIACTNHHHHHFICENCGDTKVIDFCPIEQIKQYLPNVTIHTHKLEVYGVCESCQKNA</sequence>
<dbReference type="EMBL" id="X97011">
    <property type="protein sequence ID" value="CAA65733.1"/>
    <property type="molecule type" value="Genomic_DNA"/>
</dbReference>
<dbReference type="SMR" id="P0C0P3"/>
<dbReference type="GO" id="GO:0005737">
    <property type="term" value="C:cytoplasm"/>
    <property type="evidence" value="ECO:0007669"/>
    <property type="project" value="UniProtKB-SubCell"/>
</dbReference>
<dbReference type="GO" id="GO:0003700">
    <property type="term" value="F:DNA-binding transcription factor activity"/>
    <property type="evidence" value="ECO:0007669"/>
    <property type="project" value="InterPro"/>
</dbReference>
<dbReference type="GO" id="GO:0000976">
    <property type="term" value="F:transcription cis-regulatory region binding"/>
    <property type="evidence" value="ECO:0007669"/>
    <property type="project" value="TreeGrafter"/>
</dbReference>
<dbReference type="GO" id="GO:0008270">
    <property type="term" value="F:zinc ion binding"/>
    <property type="evidence" value="ECO:0007669"/>
    <property type="project" value="TreeGrafter"/>
</dbReference>
<dbReference type="GO" id="GO:0045892">
    <property type="term" value="P:negative regulation of DNA-templated transcription"/>
    <property type="evidence" value="ECO:0007669"/>
    <property type="project" value="TreeGrafter"/>
</dbReference>
<dbReference type="GO" id="GO:1900376">
    <property type="term" value="P:regulation of secondary metabolite biosynthetic process"/>
    <property type="evidence" value="ECO:0007669"/>
    <property type="project" value="TreeGrafter"/>
</dbReference>
<dbReference type="CDD" id="cd07153">
    <property type="entry name" value="Fur_like"/>
    <property type="match status" value="1"/>
</dbReference>
<dbReference type="Gene3D" id="3.30.1490.190">
    <property type="match status" value="1"/>
</dbReference>
<dbReference type="Gene3D" id="1.10.10.10">
    <property type="entry name" value="Winged helix-like DNA-binding domain superfamily/Winged helix DNA-binding domain"/>
    <property type="match status" value="1"/>
</dbReference>
<dbReference type="InterPro" id="IPR002481">
    <property type="entry name" value="FUR"/>
</dbReference>
<dbReference type="InterPro" id="IPR043135">
    <property type="entry name" value="Fur_C"/>
</dbReference>
<dbReference type="InterPro" id="IPR036388">
    <property type="entry name" value="WH-like_DNA-bd_sf"/>
</dbReference>
<dbReference type="InterPro" id="IPR036390">
    <property type="entry name" value="WH_DNA-bd_sf"/>
</dbReference>
<dbReference type="PANTHER" id="PTHR33202:SF1">
    <property type="entry name" value="FERRIC UPTAKE REGULATION PROTEIN"/>
    <property type="match status" value="1"/>
</dbReference>
<dbReference type="PANTHER" id="PTHR33202">
    <property type="entry name" value="ZINC UPTAKE REGULATION PROTEIN"/>
    <property type="match status" value="1"/>
</dbReference>
<dbReference type="Pfam" id="PF01475">
    <property type="entry name" value="FUR"/>
    <property type="match status" value="1"/>
</dbReference>
<dbReference type="SUPFAM" id="SSF46785">
    <property type="entry name" value="Winged helix' DNA-binding domain"/>
    <property type="match status" value="1"/>
</dbReference>
<name>FUR_STAEP</name>
<evidence type="ECO:0000250" key="1"/>
<evidence type="ECO:0000305" key="2"/>
<keyword id="KW-0963">Cytoplasm</keyword>
<keyword id="KW-0238">DNA-binding</keyword>
<keyword id="KW-0408">Iron</keyword>
<keyword id="KW-0479">Metal-binding</keyword>
<keyword id="KW-0678">Repressor</keyword>
<keyword id="KW-0804">Transcription</keyword>
<keyword id="KW-0805">Transcription regulation</keyword>
<keyword id="KW-0862">Zinc</keyword>
<gene>
    <name type="primary">fur</name>
</gene>
<feature type="chain" id="PRO_0000095579" description="Ferric uptake regulation protein">
    <location>
        <begin position="1"/>
        <end position="138"/>
    </location>
</feature>
<feature type="region of interest" description="DNA-binding" evidence="1">
    <location>
        <begin position="1"/>
        <end position="85"/>
    </location>
</feature>
<feature type="region of interest" description="Dimerization" evidence="1">
    <location>
        <begin position="86"/>
        <end position="138"/>
    </location>
</feature>
<feature type="binding site" evidence="1">
    <location>
        <position position="88"/>
    </location>
    <ligand>
        <name>Fe cation</name>
        <dbReference type="ChEBI" id="CHEBI:24875"/>
    </ligand>
</feature>
<feature type="binding site" evidence="1">
    <location>
        <position position="90"/>
    </location>
    <ligand>
        <name>Fe cation</name>
        <dbReference type="ChEBI" id="CHEBI:24875"/>
    </ligand>
</feature>
<feature type="binding site" evidence="1">
    <location>
        <position position="94"/>
    </location>
    <ligand>
        <name>Zn(2+)</name>
        <dbReference type="ChEBI" id="CHEBI:29105"/>
    </ligand>
</feature>
<feature type="binding site" evidence="1">
    <location>
        <position position="97"/>
    </location>
    <ligand>
        <name>Zn(2+)</name>
        <dbReference type="ChEBI" id="CHEBI:29105"/>
    </ligand>
</feature>
<feature type="binding site" evidence="1">
    <location>
        <position position="109"/>
    </location>
    <ligand>
        <name>Fe cation</name>
        <dbReference type="ChEBI" id="CHEBI:24875"/>
    </ligand>
</feature>
<feature type="binding site" evidence="1">
    <location>
        <position position="123"/>
    </location>
    <ligand>
        <name>Fe cation</name>
        <dbReference type="ChEBI" id="CHEBI:24875"/>
    </ligand>
</feature>
<proteinExistence type="inferred from homology"/>
<reference key="1">
    <citation type="journal article" date="1996" name="FEMS Microbiol. Lett.">
        <title>Identification and analysis of a gene encoding a Fur-like protein of Staphylococcus epidermidis.</title>
        <authorList>
            <person name="Heidrich C."/>
            <person name="Hantke K."/>
            <person name="Bierbaum G."/>
            <person name="Sahl H.-G."/>
        </authorList>
    </citation>
    <scope>NUCLEOTIDE SEQUENCE [GENOMIC DNA]</scope>
    <source>
        <strain>BN 280</strain>
    </source>
</reference>
<accession>P0C0P3</accession>
<accession>P54204</accession>
<comment type="function">
    <text evidence="1">Acts as a global negative controlling element, employing Fe(2+) as a cofactor to bind the operator of the repressed genes.</text>
</comment>
<comment type="subunit">
    <text evidence="1">Homodimer.</text>
</comment>
<comment type="subcellular location">
    <subcellularLocation>
        <location evidence="1">Cytoplasm</location>
    </subcellularLocation>
</comment>
<comment type="similarity">
    <text evidence="2">Belongs to the Fur family.</text>
</comment>
<protein>
    <recommendedName>
        <fullName>Ferric uptake regulation protein</fullName>
        <shortName>Ferric uptake regulator</shortName>
    </recommendedName>
</protein>
<organism>
    <name type="scientific">Staphylococcus epidermidis</name>
    <dbReference type="NCBI Taxonomy" id="1282"/>
    <lineage>
        <taxon>Bacteria</taxon>
        <taxon>Bacillati</taxon>
        <taxon>Bacillota</taxon>
        <taxon>Bacilli</taxon>
        <taxon>Bacillales</taxon>
        <taxon>Staphylococcaceae</taxon>
        <taxon>Staphylococcus</taxon>
    </lineage>
</organism>